<evidence type="ECO:0000255" key="1">
    <source>
        <dbReference type="HAMAP-Rule" id="MF_00087"/>
    </source>
</evidence>
<sequence length="335" mass="38868">MVREGEERIGNRVLLGVIGVSYRETTLQQREQVLHILQQAQGSFRPEVFQEERDYVLLATCHRVELYSVAPAELFDSLAQEIKLLGVSPYFYRNQDCFAHLFCVAGGLDSLVLGETEIQGQVKRAYLQAAREQKLSFALHFLFQKALKEGKVFRAKGGAPYAAITIPILVDQELRRRQIDKKASLLFIGYSEINRSVAYHLRRQGFSCITFCSRQQLPTLSMRQVVREELCFQDPYRVVFLGSLELQYALPHSLWESIWDIPDRIVFDFAVPRALPSHTVFPHRYMDMDQISDWLREHRKEVNSAHLDSLREVAYRYWNSLNQRLERHDCVGANA</sequence>
<protein>
    <recommendedName>
        <fullName evidence="1">Glutamyl-tRNA reductase</fullName>
        <shortName evidence="1">GluTR</shortName>
        <ecNumber evidence="1">1.2.1.70</ecNumber>
    </recommendedName>
</protein>
<gene>
    <name evidence="1" type="primary">hemA</name>
    <name type="ordered locus">CTLon_0031</name>
</gene>
<name>HEM1_CHLTB</name>
<proteinExistence type="inferred from homology"/>
<reference key="1">
    <citation type="journal article" date="2008" name="Genome Res.">
        <title>Chlamydia trachomatis: genome sequence analysis of lymphogranuloma venereum isolates.</title>
        <authorList>
            <person name="Thomson N.R."/>
            <person name="Holden M.T.G."/>
            <person name="Carder C."/>
            <person name="Lennard N."/>
            <person name="Lockey S.J."/>
            <person name="Marsh P."/>
            <person name="Skipp P."/>
            <person name="O'Connor C.D."/>
            <person name="Goodhead I."/>
            <person name="Norbertzcak H."/>
            <person name="Harris B."/>
            <person name="Ormond D."/>
            <person name="Rance R."/>
            <person name="Quail M.A."/>
            <person name="Parkhill J."/>
            <person name="Stephens R.S."/>
            <person name="Clarke I.N."/>
        </authorList>
    </citation>
    <scope>NUCLEOTIDE SEQUENCE [LARGE SCALE GENOMIC DNA]</scope>
    <source>
        <strain>UCH-1/proctitis</strain>
    </source>
</reference>
<dbReference type="EC" id="1.2.1.70" evidence="1"/>
<dbReference type="EMBL" id="AM884177">
    <property type="protein sequence ID" value="CAP06429.1"/>
    <property type="molecule type" value="Genomic_DNA"/>
</dbReference>
<dbReference type="RefSeq" id="WP_009873277.1">
    <property type="nucleotide sequence ID" value="NC_010280.2"/>
</dbReference>
<dbReference type="SMR" id="B0BAB7"/>
<dbReference type="KEGG" id="ctl:CTLon_0031"/>
<dbReference type="HOGENOM" id="CLU_035113_3_1_0"/>
<dbReference type="UniPathway" id="UPA00251">
    <property type="reaction ID" value="UER00316"/>
</dbReference>
<dbReference type="Proteomes" id="UP001154401">
    <property type="component" value="Chromosome"/>
</dbReference>
<dbReference type="GO" id="GO:0008883">
    <property type="term" value="F:glutamyl-tRNA reductase activity"/>
    <property type="evidence" value="ECO:0007669"/>
    <property type="project" value="UniProtKB-UniRule"/>
</dbReference>
<dbReference type="GO" id="GO:0050661">
    <property type="term" value="F:NADP binding"/>
    <property type="evidence" value="ECO:0007669"/>
    <property type="project" value="InterPro"/>
</dbReference>
<dbReference type="GO" id="GO:0006782">
    <property type="term" value="P:protoporphyrinogen IX biosynthetic process"/>
    <property type="evidence" value="ECO:0007669"/>
    <property type="project" value="UniProtKB-UniRule"/>
</dbReference>
<dbReference type="Gene3D" id="3.30.460.30">
    <property type="entry name" value="Glutamyl-tRNA reductase, N-terminal domain"/>
    <property type="match status" value="1"/>
</dbReference>
<dbReference type="HAMAP" id="MF_00087">
    <property type="entry name" value="Glu_tRNA_reductase"/>
    <property type="match status" value="1"/>
</dbReference>
<dbReference type="InterPro" id="IPR000343">
    <property type="entry name" value="4pyrrol_synth_GluRdtase"/>
</dbReference>
<dbReference type="InterPro" id="IPR015895">
    <property type="entry name" value="4pyrrol_synth_GluRdtase_N"/>
</dbReference>
<dbReference type="InterPro" id="IPR018214">
    <property type="entry name" value="GluRdtase_CS"/>
</dbReference>
<dbReference type="InterPro" id="IPR036343">
    <property type="entry name" value="GluRdtase_N_sf"/>
</dbReference>
<dbReference type="NCBIfam" id="NF001909">
    <property type="entry name" value="PRK00676.1"/>
    <property type="match status" value="1"/>
</dbReference>
<dbReference type="PANTHER" id="PTHR43120">
    <property type="entry name" value="GLUTAMYL-TRNA REDUCTASE 1, CHLOROPLASTIC"/>
    <property type="match status" value="1"/>
</dbReference>
<dbReference type="PANTHER" id="PTHR43120:SF1">
    <property type="entry name" value="GLUTAMYL-TRNA REDUCTASE 1, CHLOROPLASTIC"/>
    <property type="match status" value="1"/>
</dbReference>
<dbReference type="Pfam" id="PF05201">
    <property type="entry name" value="GlutR_N"/>
    <property type="match status" value="1"/>
</dbReference>
<dbReference type="SUPFAM" id="SSF69742">
    <property type="entry name" value="Glutamyl tRNA-reductase catalytic, N-terminal domain"/>
    <property type="match status" value="1"/>
</dbReference>
<dbReference type="PROSITE" id="PS00747">
    <property type="entry name" value="GLUTR"/>
    <property type="match status" value="1"/>
</dbReference>
<organism>
    <name type="scientific">Chlamydia trachomatis serovar L2b (strain UCH-1/proctitis)</name>
    <dbReference type="NCBI Taxonomy" id="471473"/>
    <lineage>
        <taxon>Bacteria</taxon>
        <taxon>Pseudomonadati</taxon>
        <taxon>Chlamydiota</taxon>
        <taxon>Chlamydiia</taxon>
        <taxon>Chlamydiales</taxon>
        <taxon>Chlamydiaceae</taxon>
        <taxon>Chlamydia/Chlamydophila group</taxon>
        <taxon>Chlamydia</taxon>
    </lineage>
</organism>
<comment type="function">
    <text evidence="1">Catalyzes the NADPH-dependent reduction of glutamyl-tRNA(Glu) to glutamate 1-semialdehyde (GSA).</text>
</comment>
<comment type="catalytic activity">
    <reaction evidence="1">
        <text>(S)-4-amino-5-oxopentanoate + tRNA(Glu) + NADP(+) = L-glutamyl-tRNA(Glu) + NADPH + H(+)</text>
        <dbReference type="Rhea" id="RHEA:12344"/>
        <dbReference type="Rhea" id="RHEA-COMP:9663"/>
        <dbReference type="Rhea" id="RHEA-COMP:9680"/>
        <dbReference type="ChEBI" id="CHEBI:15378"/>
        <dbReference type="ChEBI" id="CHEBI:57501"/>
        <dbReference type="ChEBI" id="CHEBI:57783"/>
        <dbReference type="ChEBI" id="CHEBI:58349"/>
        <dbReference type="ChEBI" id="CHEBI:78442"/>
        <dbReference type="ChEBI" id="CHEBI:78520"/>
        <dbReference type="EC" id="1.2.1.70"/>
    </reaction>
</comment>
<comment type="pathway">
    <text evidence="1">Porphyrin-containing compound metabolism; protoporphyrin-IX biosynthesis; 5-aminolevulinate from L-glutamyl-tRNA(Glu): step 1/2.</text>
</comment>
<comment type="subunit">
    <text evidence="1">Homodimer.</text>
</comment>
<comment type="domain">
    <text evidence="1">Possesses an unusual extended V-shaped dimeric structure with each monomer consisting of three distinct domains arranged along a curved 'spinal' alpha-helix. The N-terminal catalytic domain specifically recognizes the glutamate moiety of the substrate. The second domain is the NADPH-binding domain, and the third C-terminal domain is responsible for dimerization.</text>
</comment>
<comment type="miscellaneous">
    <text evidence="1">During catalysis, the active site Cys acts as a nucleophile attacking the alpha-carbonyl group of tRNA-bound glutamate with the formation of a thioester intermediate between enzyme and glutamate, and the concomitant release of tRNA(Glu). The thioester intermediate is finally reduced by direct hydride transfer from NADPH, to form the product GSA.</text>
</comment>
<comment type="similarity">
    <text evidence="1">Belongs to the glutamyl-tRNA reductase family.</text>
</comment>
<keyword id="KW-0521">NADP</keyword>
<keyword id="KW-0560">Oxidoreductase</keyword>
<keyword id="KW-0627">Porphyrin biosynthesis</keyword>
<feature type="chain" id="PRO_1000093126" description="Glutamyl-tRNA reductase">
    <location>
        <begin position="1"/>
        <end position="335"/>
    </location>
</feature>
<feature type="active site" description="Nucleophile" evidence="1">
    <location>
        <position position="61"/>
    </location>
</feature>
<feature type="binding site" evidence="1">
    <location>
        <begin position="60"/>
        <end position="63"/>
    </location>
    <ligand>
        <name>substrate</name>
    </ligand>
</feature>
<feature type="binding site" evidence="1">
    <location>
        <position position="110"/>
    </location>
    <ligand>
        <name>substrate</name>
    </ligand>
</feature>
<feature type="binding site" evidence="1">
    <location>
        <begin position="115"/>
        <end position="117"/>
    </location>
    <ligand>
        <name>substrate</name>
    </ligand>
</feature>
<feature type="binding site" evidence="1">
    <location>
        <position position="121"/>
    </location>
    <ligand>
        <name>substrate</name>
    </ligand>
</feature>
<feature type="binding site" evidence="1">
    <location>
        <begin position="189"/>
        <end position="194"/>
    </location>
    <ligand>
        <name>NADP(+)</name>
        <dbReference type="ChEBI" id="CHEBI:58349"/>
    </ligand>
</feature>
<feature type="site" description="Important for activity" evidence="1">
    <location>
        <position position="100"/>
    </location>
</feature>
<accession>B0BAB7</accession>